<protein>
    <recommendedName>
        <fullName>Putative zinc metalloprotease HP_0258</fullName>
        <ecNumber>3.4.24.-</ecNumber>
    </recommendedName>
</protein>
<proteinExistence type="inferred from homology"/>
<evidence type="ECO:0000250" key="1"/>
<evidence type="ECO:0000255" key="2"/>
<evidence type="ECO:0000305" key="3"/>
<sequence length="348" mass="38464">MFIVAVLMLAFLIFVHELGHFTIARICGVKVEVFSIGFGKKLCFFKLFGTQFALSLIPLGGYVKLKGMDKEENGMNETTDDSYAQKSPFQKLWILFGGAFFNFLFAILVYFFLALGGEKVLLPVIGDLDKNALEAGLLKGDKILSINHKKIASFREIRSVVARARGELVLEIERNHQVLEKRLTPKIVAVISDSNDPNEMIRYKAIGIKPDMQKMGVVSYSLFQAFEKALSRFKEGVVLIVDSLRRLIMGSSSVKELSGVVGIVGALSHANSLSMLLLFGAFLSINLGILNLLPIPALDGAQMLGVVFKNIFHITLPTPIQNALWLAGVGFLVFIMFLGLFNDLTRLL</sequence>
<dbReference type="EC" id="3.4.24.-"/>
<dbReference type="EMBL" id="AE000511">
    <property type="protein sequence ID" value="AAD07326.1"/>
    <property type="molecule type" value="Genomic_DNA"/>
</dbReference>
<dbReference type="PIR" id="B64552">
    <property type="entry name" value="B64552"/>
</dbReference>
<dbReference type="RefSeq" id="NP_207056.1">
    <property type="nucleotide sequence ID" value="NC_000915.1"/>
</dbReference>
<dbReference type="SMR" id="P56136"/>
<dbReference type="FunCoup" id="P56136">
    <property type="interactions" value="293"/>
</dbReference>
<dbReference type="STRING" id="85962.HP_0258"/>
<dbReference type="PaxDb" id="85962-C694_01305"/>
<dbReference type="EnsemblBacteria" id="AAD07326">
    <property type="protein sequence ID" value="AAD07326"/>
    <property type="gene ID" value="HP_0258"/>
</dbReference>
<dbReference type="KEGG" id="heo:C694_01305"/>
<dbReference type="KEGG" id="hpy:HP_0258"/>
<dbReference type="PATRIC" id="fig|85962.47.peg.278"/>
<dbReference type="eggNOG" id="COG0750">
    <property type="taxonomic scope" value="Bacteria"/>
</dbReference>
<dbReference type="InParanoid" id="P56136"/>
<dbReference type="OrthoDB" id="9782003at2"/>
<dbReference type="PhylomeDB" id="P56136"/>
<dbReference type="Proteomes" id="UP000000429">
    <property type="component" value="Chromosome"/>
</dbReference>
<dbReference type="GO" id="GO:0005886">
    <property type="term" value="C:plasma membrane"/>
    <property type="evidence" value="ECO:0007669"/>
    <property type="project" value="UniProtKB-SubCell"/>
</dbReference>
<dbReference type="GO" id="GO:0046872">
    <property type="term" value="F:metal ion binding"/>
    <property type="evidence" value="ECO:0007669"/>
    <property type="project" value="UniProtKB-KW"/>
</dbReference>
<dbReference type="GO" id="GO:0004222">
    <property type="term" value="F:metalloendopeptidase activity"/>
    <property type="evidence" value="ECO:0007669"/>
    <property type="project" value="InterPro"/>
</dbReference>
<dbReference type="GO" id="GO:0006508">
    <property type="term" value="P:proteolysis"/>
    <property type="evidence" value="ECO:0007669"/>
    <property type="project" value="UniProtKB-KW"/>
</dbReference>
<dbReference type="CDD" id="cd06163">
    <property type="entry name" value="S2P-M50_PDZ_RseP-like"/>
    <property type="match status" value="1"/>
</dbReference>
<dbReference type="Gene3D" id="2.30.42.10">
    <property type="match status" value="1"/>
</dbReference>
<dbReference type="InterPro" id="IPR036034">
    <property type="entry name" value="PDZ_sf"/>
</dbReference>
<dbReference type="InterPro" id="IPR004387">
    <property type="entry name" value="Pept_M50_Zn"/>
</dbReference>
<dbReference type="InterPro" id="IPR008915">
    <property type="entry name" value="Peptidase_M50"/>
</dbReference>
<dbReference type="NCBIfam" id="TIGR00054">
    <property type="entry name" value="RIP metalloprotease RseP"/>
    <property type="match status" value="2"/>
</dbReference>
<dbReference type="PANTHER" id="PTHR42837:SF2">
    <property type="entry name" value="MEMBRANE METALLOPROTEASE ARASP2, CHLOROPLASTIC-RELATED"/>
    <property type="match status" value="1"/>
</dbReference>
<dbReference type="PANTHER" id="PTHR42837">
    <property type="entry name" value="REGULATOR OF SIGMA-E PROTEASE RSEP"/>
    <property type="match status" value="1"/>
</dbReference>
<dbReference type="Pfam" id="PF02163">
    <property type="entry name" value="Peptidase_M50"/>
    <property type="match status" value="1"/>
</dbReference>
<dbReference type="SUPFAM" id="SSF50156">
    <property type="entry name" value="PDZ domain-like"/>
    <property type="match status" value="1"/>
</dbReference>
<organism>
    <name type="scientific">Helicobacter pylori (strain ATCC 700392 / 26695)</name>
    <name type="common">Campylobacter pylori</name>
    <dbReference type="NCBI Taxonomy" id="85962"/>
    <lineage>
        <taxon>Bacteria</taxon>
        <taxon>Pseudomonadati</taxon>
        <taxon>Campylobacterota</taxon>
        <taxon>Epsilonproteobacteria</taxon>
        <taxon>Campylobacterales</taxon>
        <taxon>Helicobacteraceae</taxon>
        <taxon>Helicobacter</taxon>
    </lineage>
</organism>
<name>Y258_HELPY</name>
<comment type="cofactor">
    <cofactor evidence="3">
        <name>Zn(2+)</name>
        <dbReference type="ChEBI" id="CHEBI:29105"/>
    </cofactor>
</comment>
<comment type="subcellular location">
    <subcellularLocation>
        <location evidence="1">Cell inner membrane</location>
        <topology evidence="1">Multi-pass membrane protein</topology>
    </subcellularLocation>
</comment>
<comment type="similarity">
    <text evidence="3">Belongs to the peptidase M50B family.</text>
</comment>
<keyword id="KW-0997">Cell inner membrane</keyword>
<keyword id="KW-1003">Cell membrane</keyword>
<keyword id="KW-0378">Hydrolase</keyword>
<keyword id="KW-0472">Membrane</keyword>
<keyword id="KW-0479">Metal-binding</keyword>
<keyword id="KW-0482">Metalloprotease</keyword>
<keyword id="KW-0645">Protease</keyword>
<keyword id="KW-1185">Reference proteome</keyword>
<keyword id="KW-0812">Transmembrane</keyword>
<keyword id="KW-1133">Transmembrane helix</keyword>
<keyword id="KW-0862">Zinc</keyword>
<gene>
    <name type="ordered locus">HP_0258</name>
</gene>
<reference key="1">
    <citation type="journal article" date="1997" name="Nature">
        <title>The complete genome sequence of the gastric pathogen Helicobacter pylori.</title>
        <authorList>
            <person name="Tomb J.-F."/>
            <person name="White O."/>
            <person name="Kerlavage A.R."/>
            <person name="Clayton R.A."/>
            <person name="Sutton G.G."/>
            <person name="Fleischmann R.D."/>
            <person name="Ketchum K.A."/>
            <person name="Klenk H.-P."/>
            <person name="Gill S.R."/>
            <person name="Dougherty B.A."/>
            <person name="Nelson K.E."/>
            <person name="Quackenbush J."/>
            <person name="Zhou L."/>
            <person name="Kirkness E.F."/>
            <person name="Peterson S.N."/>
            <person name="Loftus B.J."/>
            <person name="Richardson D.L."/>
            <person name="Dodson R.J."/>
            <person name="Khalak H.G."/>
            <person name="Glodek A."/>
            <person name="McKenney K."/>
            <person name="FitzGerald L.M."/>
            <person name="Lee N."/>
            <person name="Adams M.D."/>
            <person name="Hickey E.K."/>
            <person name="Berg D.E."/>
            <person name="Gocayne J.D."/>
            <person name="Utterback T.R."/>
            <person name="Peterson J.D."/>
            <person name="Kelley J.M."/>
            <person name="Cotton M.D."/>
            <person name="Weidman J.F."/>
            <person name="Fujii C."/>
            <person name="Bowman C."/>
            <person name="Watthey L."/>
            <person name="Wallin E."/>
            <person name="Hayes W.S."/>
            <person name="Borodovsky M."/>
            <person name="Karp P.D."/>
            <person name="Smith H.O."/>
            <person name="Fraser C.M."/>
            <person name="Venter J.C."/>
        </authorList>
    </citation>
    <scope>NUCLEOTIDE SEQUENCE [LARGE SCALE GENOMIC DNA]</scope>
    <source>
        <strain>ATCC 700392 / 26695</strain>
    </source>
</reference>
<accession>P56136</accession>
<feature type="chain" id="PRO_0000088443" description="Putative zinc metalloprotease HP_0258">
    <location>
        <begin position="1"/>
        <end position="348"/>
    </location>
</feature>
<feature type="transmembrane region" description="Helical" evidence="2">
    <location>
        <begin position="43"/>
        <end position="63"/>
    </location>
</feature>
<feature type="transmembrane region" description="Helical" evidence="2">
    <location>
        <begin position="93"/>
        <end position="113"/>
    </location>
</feature>
<feature type="transmembrane region" description="Helical" evidence="2">
    <location>
        <begin position="247"/>
        <end position="267"/>
    </location>
</feature>
<feature type="transmembrane region" description="Helical" evidence="2">
    <location>
        <begin position="275"/>
        <end position="295"/>
    </location>
</feature>
<feature type="transmembrane region" description="Helical" evidence="2">
    <location>
        <begin position="324"/>
        <end position="344"/>
    </location>
</feature>
<feature type="domain" description="PDZ">
    <location>
        <begin position="106"/>
        <end position="175"/>
    </location>
</feature>
<feature type="active site" evidence="2">
    <location>
        <position position="17"/>
    </location>
</feature>
<feature type="binding site" evidence="2">
    <location>
        <position position="16"/>
    </location>
    <ligand>
        <name>Zn(2+)</name>
        <dbReference type="ChEBI" id="CHEBI:29105"/>
        <note>catalytic</note>
    </ligand>
</feature>
<feature type="binding site" evidence="2">
    <location>
        <position position="20"/>
    </location>
    <ligand>
        <name>Zn(2+)</name>
        <dbReference type="ChEBI" id="CHEBI:29105"/>
        <note>catalytic</note>
    </ligand>
</feature>